<proteinExistence type="predicted"/>
<organism>
    <name type="scientific">Schizosaccharomyces pombe (strain 972 / ATCC 24843)</name>
    <name type="common">Fission yeast</name>
    <dbReference type="NCBI Taxonomy" id="284812"/>
    <lineage>
        <taxon>Eukaryota</taxon>
        <taxon>Fungi</taxon>
        <taxon>Dikarya</taxon>
        <taxon>Ascomycota</taxon>
        <taxon>Taphrinomycotina</taxon>
        <taxon>Schizosaccharomycetes</taxon>
        <taxon>Schizosaccharomycetales</taxon>
        <taxon>Schizosaccharomycetaceae</taxon>
        <taxon>Schizosaccharomyces</taxon>
    </lineage>
</organism>
<dbReference type="EMBL" id="CU329670">
    <property type="protein sequence ID" value="CCD31326.1"/>
    <property type="molecule type" value="Genomic_DNA"/>
</dbReference>
<dbReference type="RefSeq" id="XP_004001781.1">
    <property type="nucleotide sequence ID" value="XM_004001732.1"/>
</dbReference>
<dbReference type="PaxDb" id="4896-SPAC8E11.12.1"/>
<dbReference type="EnsemblFungi" id="SPAC8E11.12.1">
    <property type="protein sequence ID" value="SPAC8E11.12.1:pep"/>
    <property type="gene ID" value="SPAC8E11.12"/>
</dbReference>
<dbReference type="PomBase" id="SPAC8E11.12"/>
<dbReference type="VEuPathDB" id="FungiDB:SPAC8E11.12"/>
<dbReference type="HOGENOM" id="CLU_2279107_0_0_1"/>
<dbReference type="InParanoid" id="G2TRM4"/>
<dbReference type="PRO" id="PR:G2TRM4"/>
<dbReference type="Proteomes" id="UP000002485">
    <property type="component" value="Chromosome I"/>
</dbReference>
<accession>G2TRM4</accession>
<sequence length="102" mass="11893">MISLLSIKMQAIKELDSEEEPKVGEFYKGNTISFCKNSLENDTQLPQILFCINPKSIRNFLFPPIAISDPKEAQNHCSSYYYIKYRYYIVQSRCGMMGRMSF</sequence>
<keyword id="KW-1185">Reference proteome</keyword>
<feature type="chain" id="PRO_0000416630" description="Uncharacterized protein C8E11.12">
    <location>
        <begin position="1"/>
        <end position="102"/>
    </location>
</feature>
<protein>
    <recommendedName>
        <fullName>Uncharacterized protein C8E11.12</fullName>
    </recommendedName>
</protein>
<reference key="1">
    <citation type="journal article" date="2002" name="Nature">
        <title>The genome sequence of Schizosaccharomyces pombe.</title>
        <authorList>
            <person name="Wood V."/>
            <person name="Gwilliam R."/>
            <person name="Rajandream M.A."/>
            <person name="Lyne M.H."/>
            <person name="Lyne R."/>
            <person name="Stewart A."/>
            <person name="Sgouros J.G."/>
            <person name="Peat N."/>
            <person name="Hayles J."/>
            <person name="Baker S.G."/>
            <person name="Basham D."/>
            <person name="Bowman S."/>
            <person name="Brooks K."/>
            <person name="Brown D."/>
            <person name="Brown S."/>
            <person name="Chillingworth T."/>
            <person name="Churcher C.M."/>
            <person name="Collins M."/>
            <person name="Connor R."/>
            <person name="Cronin A."/>
            <person name="Davis P."/>
            <person name="Feltwell T."/>
            <person name="Fraser A."/>
            <person name="Gentles S."/>
            <person name="Goble A."/>
            <person name="Hamlin N."/>
            <person name="Harris D.E."/>
            <person name="Hidalgo J."/>
            <person name="Hodgson G."/>
            <person name="Holroyd S."/>
            <person name="Hornsby T."/>
            <person name="Howarth S."/>
            <person name="Huckle E.J."/>
            <person name="Hunt S."/>
            <person name="Jagels K."/>
            <person name="James K.D."/>
            <person name="Jones L."/>
            <person name="Jones M."/>
            <person name="Leather S."/>
            <person name="McDonald S."/>
            <person name="McLean J."/>
            <person name="Mooney P."/>
            <person name="Moule S."/>
            <person name="Mungall K.L."/>
            <person name="Murphy L.D."/>
            <person name="Niblett D."/>
            <person name="Odell C."/>
            <person name="Oliver K."/>
            <person name="O'Neil S."/>
            <person name="Pearson D."/>
            <person name="Quail M.A."/>
            <person name="Rabbinowitsch E."/>
            <person name="Rutherford K.M."/>
            <person name="Rutter S."/>
            <person name="Saunders D."/>
            <person name="Seeger K."/>
            <person name="Sharp S."/>
            <person name="Skelton J."/>
            <person name="Simmonds M.N."/>
            <person name="Squares R."/>
            <person name="Squares S."/>
            <person name="Stevens K."/>
            <person name="Taylor K."/>
            <person name="Taylor R.G."/>
            <person name="Tivey A."/>
            <person name="Walsh S.V."/>
            <person name="Warren T."/>
            <person name="Whitehead S."/>
            <person name="Woodward J.R."/>
            <person name="Volckaert G."/>
            <person name="Aert R."/>
            <person name="Robben J."/>
            <person name="Grymonprez B."/>
            <person name="Weltjens I."/>
            <person name="Vanstreels E."/>
            <person name="Rieger M."/>
            <person name="Schaefer M."/>
            <person name="Mueller-Auer S."/>
            <person name="Gabel C."/>
            <person name="Fuchs M."/>
            <person name="Duesterhoeft A."/>
            <person name="Fritzc C."/>
            <person name="Holzer E."/>
            <person name="Moestl D."/>
            <person name="Hilbert H."/>
            <person name="Borzym K."/>
            <person name="Langer I."/>
            <person name="Beck A."/>
            <person name="Lehrach H."/>
            <person name="Reinhardt R."/>
            <person name="Pohl T.M."/>
            <person name="Eger P."/>
            <person name="Zimmermann W."/>
            <person name="Wedler H."/>
            <person name="Wambutt R."/>
            <person name="Purnelle B."/>
            <person name="Goffeau A."/>
            <person name="Cadieu E."/>
            <person name="Dreano S."/>
            <person name="Gloux S."/>
            <person name="Lelaure V."/>
            <person name="Mottier S."/>
            <person name="Galibert F."/>
            <person name="Aves S.J."/>
            <person name="Xiang Z."/>
            <person name="Hunt C."/>
            <person name="Moore K."/>
            <person name="Hurst S.M."/>
            <person name="Lucas M."/>
            <person name="Rochet M."/>
            <person name="Gaillardin C."/>
            <person name="Tallada V.A."/>
            <person name="Garzon A."/>
            <person name="Thode G."/>
            <person name="Daga R.R."/>
            <person name="Cruzado L."/>
            <person name="Jimenez J."/>
            <person name="Sanchez M."/>
            <person name="del Rey F."/>
            <person name="Benito J."/>
            <person name="Dominguez A."/>
            <person name="Revuelta J.L."/>
            <person name="Moreno S."/>
            <person name="Armstrong J."/>
            <person name="Forsburg S.L."/>
            <person name="Cerutti L."/>
            <person name="Lowe T."/>
            <person name="McCombie W.R."/>
            <person name="Paulsen I."/>
            <person name="Potashkin J."/>
            <person name="Shpakovski G.V."/>
            <person name="Ussery D."/>
            <person name="Barrell B.G."/>
            <person name="Nurse P."/>
        </authorList>
    </citation>
    <scope>NUCLEOTIDE SEQUENCE [LARGE SCALE GENOMIC DNA]</scope>
    <source>
        <strain>972 / ATCC 24843</strain>
    </source>
</reference>
<reference key="2">
    <citation type="journal article" date="2011" name="Science">
        <title>Comparative functional genomics of the fission yeasts.</title>
        <authorList>
            <person name="Rhind N."/>
            <person name="Chen Z."/>
            <person name="Yassour M."/>
            <person name="Thompson D.A."/>
            <person name="Haas B.J."/>
            <person name="Habib N."/>
            <person name="Wapinski I."/>
            <person name="Roy S."/>
            <person name="Lin M.F."/>
            <person name="Heiman D.I."/>
            <person name="Young S.K."/>
            <person name="Furuya K."/>
            <person name="Guo Y."/>
            <person name="Pidoux A."/>
            <person name="Chen H.M."/>
            <person name="Robbertse B."/>
            <person name="Goldberg J.M."/>
            <person name="Aoki K."/>
            <person name="Bayne E.H."/>
            <person name="Berlin A.M."/>
            <person name="Desjardins C.A."/>
            <person name="Dobbs E."/>
            <person name="Dukaj L."/>
            <person name="Fan L."/>
            <person name="FitzGerald M.G."/>
            <person name="French C."/>
            <person name="Gujja S."/>
            <person name="Hansen K."/>
            <person name="Keifenheim D."/>
            <person name="Levin J.Z."/>
            <person name="Mosher R.A."/>
            <person name="Mueller C.A."/>
            <person name="Pfiffner J."/>
            <person name="Priest M."/>
            <person name="Russ C."/>
            <person name="Smialowska A."/>
            <person name="Swoboda P."/>
            <person name="Sykes S.M."/>
            <person name="Vaughn M."/>
            <person name="Vengrova S."/>
            <person name="Yoder R."/>
            <person name="Zeng Q."/>
            <person name="Allshire R."/>
            <person name="Baulcombe D."/>
            <person name="Birren B.W."/>
            <person name="Brown W."/>
            <person name="Ekwall K."/>
            <person name="Kellis M."/>
            <person name="Leatherwood J."/>
            <person name="Levin H."/>
            <person name="Margalit H."/>
            <person name="Martienssen R."/>
            <person name="Nieduszynski C.A."/>
            <person name="Spatafora J.W."/>
            <person name="Friedman N."/>
            <person name="Dalgaard J.Z."/>
            <person name="Baumann P."/>
            <person name="Niki H."/>
            <person name="Regev A."/>
            <person name="Nusbaum C."/>
        </authorList>
    </citation>
    <scope>IDENTIFICATION</scope>
</reference>
<gene>
    <name type="ORF">SPAC8E11.12</name>
</gene>
<name>YFQC_SCHPO</name>